<comment type="function">
    <text evidence="1 2 4 6 13">Together with cyp51B and cyp51C, encodes the sterol 14alpha-demethylase that plays a critical role in the third module of ergosterol biosynthesis pathway, being ergosterol the major sterol component in fungal membranes that participates in a variety of functions (PubMed:20955812, PubMed:23442154). CYP51A encodes the sterol 14-alpha-demethylase induced on ergosterol depletion and is responsible for the intrinsic variation in azole sensitivity (PubMed:20955812, PubMed:23442154). The third module or late pathway involves the ergosterol synthesis itself through consecutive reactions that mainly occur in the endoplasmic reticulum (ER) membrane (By similarity). In filamentous fungi, during the initial step of this module, lanosterol (lanosta-8,24-dien-3beta-ol) can be metabolized to eburicol (By similarity). Sterol 14alpha-demethylase catalyzes the three-step oxidative removal of the 14alpha-methyl group (C-32) of both these sterols in the form of formate, and converts eburicol and lanosterol to 14-demethyleburicol (4,4,24-trimethylergosta-8,14,24(28)-trienol) and 4,4-dimethyl-5alpha-cholesta-8,14,24-trien-3beta-ol, respectively, which are further metabolized by other enzymes in the pathway to ergosterol (Probable). Can also use substrates not intrinsic to fungi, such as 24,25-dihydrolanosterol (DHL), producing 4,4'-dimethyl-8,14-cholestadien-3-beta-ol, but at lower rates than the endogenous substrates (By similarity).</text>
</comment>
<comment type="catalytic activity">
    <reaction evidence="13">
        <text>a 14alpha-methyl steroid + 3 reduced [NADPH--hemoprotein reductase] + 3 O2 = a Delta(14) steroid + formate + 3 oxidized [NADPH--hemoprotein reductase] + 4 H2O + 4 H(+)</text>
        <dbReference type="Rhea" id="RHEA:54028"/>
        <dbReference type="Rhea" id="RHEA-COMP:11964"/>
        <dbReference type="Rhea" id="RHEA-COMP:11965"/>
        <dbReference type="ChEBI" id="CHEBI:15377"/>
        <dbReference type="ChEBI" id="CHEBI:15378"/>
        <dbReference type="ChEBI" id="CHEBI:15379"/>
        <dbReference type="ChEBI" id="CHEBI:15740"/>
        <dbReference type="ChEBI" id="CHEBI:57618"/>
        <dbReference type="ChEBI" id="CHEBI:58210"/>
        <dbReference type="ChEBI" id="CHEBI:138029"/>
        <dbReference type="ChEBI" id="CHEBI:138031"/>
        <dbReference type="EC" id="1.14.14.154"/>
    </reaction>
    <physiologicalReaction direction="left-to-right" evidence="13">
        <dbReference type="Rhea" id="RHEA:54029"/>
    </physiologicalReaction>
</comment>
<comment type="catalytic activity">
    <reaction evidence="1">
        <text>a 14alpha-methyl steroid + reduced [NADPH--hemoprotein reductase] + O2 = a 14alpha-hydroxymethyl steroid + oxidized [NADPH--hemoprotein reductase] + H2O + H(+)</text>
        <dbReference type="Rhea" id="RHEA:68060"/>
        <dbReference type="Rhea" id="RHEA-COMP:11964"/>
        <dbReference type="Rhea" id="RHEA-COMP:11965"/>
        <dbReference type="ChEBI" id="CHEBI:15377"/>
        <dbReference type="ChEBI" id="CHEBI:15378"/>
        <dbReference type="ChEBI" id="CHEBI:15379"/>
        <dbReference type="ChEBI" id="CHEBI:57618"/>
        <dbReference type="ChEBI" id="CHEBI:58210"/>
        <dbReference type="ChEBI" id="CHEBI:138029"/>
        <dbReference type="ChEBI" id="CHEBI:176901"/>
    </reaction>
    <physiologicalReaction direction="left-to-right" evidence="1">
        <dbReference type="Rhea" id="RHEA:68061"/>
    </physiologicalReaction>
</comment>
<comment type="catalytic activity">
    <reaction evidence="1">
        <text>a 14alpha-hydroxymethyl steroid + reduced [NADPH--hemoprotein reductase] + O2 = a 14alpha-formyl steroid + oxidized [NADPH--hemoprotein reductase] + 2 H2O + H(+)</text>
        <dbReference type="Rhea" id="RHEA:68064"/>
        <dbReference type="Rhea" id="RHEA-COMP:11964"/>
        <dbReference type="Rhea" id="RHEA-COMP:11965"/>
        <dbReference type="ChEBI" id="CHEBI:15377"/>
        <dbReference type="ChEBI" id="CHEBI:15378"/>
        <dbReference type="ChEBI" id="CHEBI:15379"/>
        <dbReference type="ChEBI" id="CHEBI:57618"/>
        <dbReference type="ChEBI" id="CHEBI:58210"/>
        <dbReference type="ChEBI" id="CHEBI:176901"/>
        <dbReference type="ChEBI" id="CHEBI:176902"/>
    </reaction>
    <physiologicalReaction direction="left-to-right" evidence="1">
        <dbReference type="Rhea" id="RHEA:68065"/>
    </physiologicalReaction>
</comment>
<comment type="catalytic activity">
    <reaction evidence="1">
        <text>a 14alpha-formyl steroid + reduced [NADPH--hemoprotein reductase] + O2 = a Delta(14) steroid + formate + oxidized [NADPH--hemoprotein reductase] + H2O + 2 H(+)</text>
        <dbReference type="Rhea" id="RHEA:68068"/>
        <dbReference type="Rhea" id="RHEA-COMP:11964"/>
        <dbReference type="Rhea" id="RHEA-COMP:11965"/>
        <dbReference type="ChEBI" id="CHEBI:15377"/>
        <dbReference type="ChEBI" id="CHEBI:15378"/>
        <dbReference type="ChEBI" id="CHEBI:15379"/>
        <dbReference type="ChEBI" id="CHEBI:15740"/>
        <dbReference type="ChEBI" id="CHEBI:57618"/>
        <dbReference type="ChEBI" id="CHEBI:58210"/>
        <dbReference type="ChEBI" id="CHEBI:138031"/>
        <dbReference type="ChEBI" id="CHEBI:176902"/>
    </reaction>
    <physiologicalReaction direction="left-to-right" evidence="1">
        <dbReference type="Rhea" id="RHEA:68069"/>
    </physiologicalReaction>
</comment>
<comment type="catalytic activity">
    <reaction evidence="2">
        <text>lanosterol + 3 reduced [NADPH--hemoprotein reductase] + 3 O2 = 4,4-dimethyl-5alpha-cholesta-8,14,24-trien-3beta-ol + formate + 3 oxidized [NADPH--hemoprotein reductase] + 4 H2O + 4 H(+)</text>
        <dbReference type="Rhea" id="RHEA:25286"/>
        <dbReference type="Rhea" id="RHEA-COMP:11964"/>
        <dbReference type="Rhea" id="RHEA-COMP:11965"/>
        <dbReference type="ChEBI" id="CHEBI:15377"/>
        <dbReference type="ChEBI" id="CHEBI:15378"/>
        <dbReference type="ChEBI" id="CHEBI:15379"/>
        <dbReference type="ChEBI" id="CHEBI:15740"/>
        <dbReference type="ChEBI" id="CHEBI:16521"/>
        <dbReference type="ChEBI" id="CHEBI:17813"/>
        <dbReference type="ChEBI" id="CHEBI:57618"/>
        <dbReference type="ChEBI" id="CHEBI:58210"/>
        <dbReference type="EC" id="1.14.14.154"/>
    </reaction>
    <physiologicalReaction direction="left-to-right" evidence="2">
        <dbReference type="Rhea" id="RHEA:25287"/>
    </physiologicalReaction>
</comment>
<comment type="catalytic activity">
    <reaction evidence="1">
        <text>lanosterol + reduced [NADPH--hemoprotein reductase] + O2 = 32-hydroxylanosterol + oxidized [NADPH--hemoprotein reductase] + H2O + H(+)</text>
        <dbReference type="Rhea" id="RHEA:75103"/>
        <dbReference type="Rhea" id="RHEA-COMP:11964"/>
        <dbReference type="Rhea" id="RHEA-COMP:11965"/>
        <dbReference type="ChEBI" id="CHEBI:15377"/>
        <dbReference type="ChEBI" id="CHEBI:15378"/>
        <dbReference type="ChEBI" id="CHEBI:15379"/>
        <dbReference type="ChEBI" id="CHEBI:16521"/>
        <dbReference type="ChEBI" id="CHEBI:57618"/>
        <dbReference type="ChEBI" id="CHEBI:58210"/>
        <dbReference type="ChEBI" id="CHEBI:166806"/>
    </reaction>
    <physiologicalReaction direction="left-to-right" evidence="1">
        <dbReference type="Rhea" id="RHEA:75104"/>
    </physiologicalReaction>
</comment>
<comment type="catalytic activity">
    <reaction evidence="1">
        <text>32-hydroxylanosterol + reduced [NADPH--hemoprotein reductase] + O2 = 32-oxolanosterol + oxidized [NADPH--hemoprotein reductase] + 2 H2O + H(+)</text>
        <dbReference type="Rhea" id="RHEA:75107"/>
        <dbReference type="Rhea" id="RHEA-COMP:11964"/>
        <dbReference type="Rhea" id="RHEA-COMP:11965"/>
        <dbReference type="ChEBI" id="CHEBI:15377"/>
        <dbReference type="ChEBI" id="CHEBI:15378"/>
        <dbReference type="ChEBI" id="CHEBI:15379"/>
        <dbReference type="ChEBI" id="CHEBI:57618"/>
        <dbReference type="ChEBI" id="CHEBI:58210"/>
        <dbReference type="ChEBI" id="CHEBI:166681"/>
        <dbReference type="ChEBI" id="CHEBI:166806"/>
    </reaction>
    <physiologicalReaction direction="left-to-right" evidence="1">
        <dbReference type="Rhea" id="RHEA:75108"/>
    </physiologicalReaction>
</comment>
<comment type="catalytic activity">
    <reaction evidence="1">
        <text>32-oxolanosterol + reduced [NADPH--hemoprotein reductase] + O2 = 4,4-dimethyl-5alpha-cholesta-8,14,24-trien-3beta-ol + formate + oxidized [NADPH--hemoprotein reductase] + H2O + 2 H(+)</text>
        <dbReference type="Rhea" id="RHEA:75111"/>
        <dbReference type="Rhea" id="RHEA-COMP:11964"/>
        <dbReference type="Rhea" id="RHEA-COMP:11965"/>
        <dbReference type="ChEBI" id="CHEBI:15377"/>
        <dbReference type="ChEBI" id="CHEBI:15378"/>
        <dbReference type="ChEBI" id="CHEBI:15379"/>
        <dbReference type="ChEBI" id="CHEBI:15740"/>
        <dbReference type="ChEBI" id="CHEBI:17813"/>
        <dbReference type="ChEBI" id="CHEBI:57618"/>
        <dbReference type="ChEBI" id="CHEBI:58210"/>
        <dbReference type="ChEBI" id="CHEBI:166681"/>
    </reaction>
    <physiologicalReaction direction="left-to-right" evidence="1">
        <dbReference type="Rhea" id="RHEA:75112"/>
    </physiologicalReaction>
</comment>
<comment type="catalytic activity">
    <reaction evidence="13">
        <text>eburicol + 3 reduced [NADPH--hemoprotein reductase] + 3 O2 = 14-demethyleburicol + formate + 3 oxidized [NADPH--hemoprotein reductase] + 4 H2O + 4 H(+)</text>
        <dbReference type="Rhea" id="RHEA:75439"/>
        <dbReference type="Rhea" id="RHEA-COMP:11964"/>
        <dbReference type="Rhea" id="RHEA-COMP:11965"/>
        <dbReference type="ChEBI" id="CHEBI:15377"/>
        <dbReference type="ChEBI" id="CHEBI:15378"/>
        <dbReference type="ChEBI" id="CHEBI:15379"/>
        <dbReference type="ChEBI" id="CHEBI:15740"/>
        <dbReference type="ChEBI" id="CHEBI:57618"/>
        <dbReference type="ChEBI" id="CHEBI:58210"/>
        <dbReference type="ChEBI" id="CHEBI:70315"/>
        <dbReference type="ChEBI" id="CHEBI:194330"/>
    </reaction>
    <physiologicalReaction direction="left-to-right" evidence="13">
        <dbReference type="Rhea" id="RHEA:75440"/>
    </physiologicalReaction>
</comment>
<comment type="catalytic activity">
    <reaction evidence="1">
        <text>eburicol + reduced [NADPH--hemoprotein reductase] + O2 = 32-hydroxyeburicol + oxidized [NADPH--hemoprotein reductase] + H2O + H(+)</text>
        <dbReference type="Rhea" id="RHEA:75427"/>
        <dbReference type="Rhea" id="RHEA-COMP:11964"/>
        <dbReference type="Rhea" id="RHEA-COMP:11965"/>
        <dbReference type="ChEBI" id="CHEBI:15377"/>
        <dbReference type="ChEBI" id="CHEBI:15378"/>
        <dbReference type="ChEBI" id="CHEBI:15379"/>
        <dbReference type="ChEBI" id="CHEBI:57618"/>
        <dbReference type="ChEBI" id="CHEBI:58210"/>
        <dbReference type="ChEBI" id="CHEBI:70315"/>
        <dbReference type="ChEBI" id="CHEBI:194328"/>
    </reaction>
    <physiologicalReaction direction="left-to-right" evidence="1">
        <dbReference type="Rhea" id="RHEA:75428"/>
    </physiologicalReaction>
</comment>
<comment type="catalytic activity">
    <reaction evidence="1">
        <text>32-hydroxyeburicol + reduced [NADPH--hemoprotein reductase] + O2 = 32-oxoeburicol + oxidized [NADPH--hemoprotein reductase] + 2 H2O + H(+)</text>
        <dbReference type="Rhea" id="RHEA:75431"/>
        <dbReference type="Rhea" id="RHEA-COMP:11964"/>
        <dbReference type="Rhea" id="RHEA-COMP:11965"/>
        <dbReference type="ChEBI" id="CHEBI:15377"/>
        <dbReference type="ChEBI" id="CHEBI:15378"/>
        <dbReference type="ChEBI" id="CHEBI:15379"/>
        <dbReference type="ChEBI" id="CHEBI:57618"/>
        <dbReference type="ChEBI" id="CHEBI:58210"/>
        <dbReference type="ChEBI" id="CHEBI:194328"/>
        <dbReference type="ChEBI" id="CHEBI:194329"/>
    </reaction>
    <physiologicalReaction direction="left-to-right" evidence="1">
        <dbReference type="Rhea" id="RHEA:75432"/>
    </physiologicalReaction>
</comment>
<comment type="catalytic activity">
    <reaction evidence="1">
        <text>32-oxoeburicol + reduced [NADPH--hemoprotein reductase] + O2 = 14-demethyleburicol + formate + oxidized [NADPH--hemoprotein reductase] + H2O + 2 H(+)</text>
        <dbReference type="Rhea" id="RHEA:75435"/>
        <dbReference type="Rhea" id="RHEA-COMP:11964"/>
        <dbReference type="Rhea" id="RHEA-COMP:11965"/>
        <dbReference type="ChEBI" id="CHEBI:15377"/>
        <dbReference type="ChEBI" id="CHEBI:15378"/>
        <dbReference type="ChEBI" id="CHEBI:15379"/>
        <dbReference type="ChEBI" id="CHEBI:15740"/>
        <dbReference type="ChEBI" id="CHEBI:57618"/>
        <dbReference type="ChEBI" id="CHEBI:58210"/>
        <dbReference type="ChEBI" id="CHEBI:194329"/>
        <dbReference type="ChEBI" id="CHEBI:194330"/>
    </reaction>
    <physiologicalReaction direction="left-to-right" evidence="1">
        <dbReference type="Rhea" id="RHEA:75436"/>
    </physiologicalReaction>
</comment>
<comment type="cofactor">
    <cofactor evidence="1">
        <name>heme</name>
        <dbReference type="ChEBI" id="CHEBI:30413"/>
    </cofactor>
</comment>
<comment type="pathway">
    <text evidence="13">Steroid metabolism; ergosterol biosynthesis.</text>
</comment>
<comment type="subcellular location">
    <subcellularLocation>
        <location evidence="11">Endoplasmic reticulum membrane</location>
        <topology evidence="3">Single-pass membrane protein</topology>
    </subcellularLocation>
</comment>
<comment type="induction">
    <text evidence="5 6 8">Expression is induced by azole antifungals such as prochloraz, tebuconazole or epoxiconazole (PubMed:23442154). Expression is increased in the absence of the C-24(28) sterol reductase ERG4 (PubMed:22947191). Expression is positively regulated by the FgSR transcription factor that targets gene promoters containing 2 conserved CGAA repeat sequences (PubMed:30874562).</text>
</comment>
<comment type="disruption phenotype">
    <text evidence="4 6 7">Decreases the amounts of 4,4-dimethylergosta-8,14,24(28)-trienol, the product of the Fusarium sterol 14-alpha demethylases (PubMed:23442154). Leads to reduced ability to produce conidia (PubMed:20955812). Results in high sensitivity to triadimefon and antifungal azoles such as propiconazole (PubMed:20955812, PubMed:23442154). Affects ergosterol production in the presence of ebuconazole or triadimefon (PubMed:20955812). Host-induced gene silencing of the 3 genes encoding sterol C14-alpha-demethylase leads to strong resistance of host to Fusarium species (PubMed:24218613).</text>
</comment>
<comment type="miscellaneous">
    <text evidence="6">In Fusarium, the biosynthesis pathway of the sterol precursors leading to the prevalent sterol ergosterol differs from yeast. The ringsystem of lanosterol in S.cerevisiae is firstly demethylised in three enzymatic steps leading to the intermediate zymosterol and secondly a methyl group is added to zymosterol by the sterol 24-C-methyltransferase to form fecosterol. In Fusarium, lanosterol is firstly transmethylated by the sterol 24-C-methyltransferase leading to the intermediate eburicol and secondly demethylated in three steps to form fecosterol.</text>
</comment>
<comment type="similarity">
    <text evidence="11">Belongs to the cytochrome P450 family.</text>
</comment>
<dbReference type="EC" id="1.14.14.154" evidence="12"/>
<dbReference type="EMBL" id="HG970333">
    <property type="protein sequence ID" value="CEF79036.1"/>
    <property type="molecule type" value="Genomic_DNA"/>
</dbReference>
<dbReference type="RefSeq" id="XP_011321548.1">
    <property type="nucleotide sequence ID" value="XM_011323246.1"/>
</dbReference>
<dbReference type="SMR" id="I1RJR2"/>
<dbReference type="FunCoup" id="I1RJR2">
    <property type="interactions" value="571"/>
</dbReference>
<dbReference type="STRING" id="229533.I1RJR2"/>
<dbReference type="KEGG" id="fgr:FGSG_04092"/>
<dbReference type="VEuPathDB" id="FungiDB:FGRAMPH1_01G14465"/>
<dbReference type="eggNOG" id="KOG0684">
    <property type="taxonomic scope" value="Eukaryota"/>
</dbReference>
<dbReference type="HOGENOM" id="CLU_001570_15_0_1"/>
<dbReference type="InParanoid" id="I1RJR2"/>
<dbReference type="OrthoDB" id="21629at110618"/>
<dbReference type="UniPathway" id="UPA00768"/>
<dbReference type="PHI-base" id="PHI:12031"/>
<dbReference type="Proteomes" id="UP000070720">
    <property type="component" value="Chromosome 2"/>
</dbReference>
<dbReference type="GO" id="GO:0005789">
    <property type="term" value="C:endoplasmic reticulum membrane"/>
    <property type="evidence" value="ECO:0007669"/>
    <property type="project" value="UniProtKB-SubCell"/>
</dbReference>
<dbReference type="GO" id="GO:0020037">
    <property type="term" value="F:heme binding"/>
    <property type="evidence" value="ECO:0007669"/>
    <property type="project" value="InterPro"/>
</dbReference>
<dbReference type="GO" id="GO:0005506">
    <property type="term" value="F:iron ion binding"/>
    <property type="evidence" value="ECO:0007669"/>
    <property type="project" value="InterPro"/>
</dbReference>
<dbReference type="GO" id="GO:0004497">
    <property type="term" value="F:monooxygenase activity"/>
    <property type="evidence" value="ECO:0007669"/>
    <property type="project" value="UniProtKB-KW"/>
</dbReference>
<dbReference type="GO" id="GO:0016705">
    <property type="term" value="F:oxidoreductase activity, acting on paired donors, with incorporation or reduction of molecular oxygen"/>
    <property type="evidence" value="ECO:0007669"/>
    <property type="project" value="InterPro"/>
</dbReference>
<dbReference type="GO" id="GO:0016126">
    <property type="term" value="P:sterol biosynthetic process"/>
    <property type="evidence" value="ECO:0007669"/>
    <property type="project" value="UniProtKB-UniPathway"/>
</dbReference>
<dbReference type="CDD" id="cd11042">
    <property type="entry name" value="CYP51-like"/>
    <property type="match status" value="1"/>
</dbReference>
<dbReference type="FunFam" id="1.10.630.10:FF:000033">
    <property type="entry name" value="14-alpha sterol demethylase"/>
    <property type="match status" value="1"/>
</dbReference>
<dbReference type="Gene3D" id="1.10.630.10">
    <property type="entry name" value="Cytochrome P450"/>
    <property type="match status" value="1"/>
</dbReference>
<dbReference type="InterPro" id="IPR050529">
    <property type="entry name" value="CYP450_sterol_14alpha_dmase"/>
</dbReference>
<dbReference type="InterPro" id="IPR001128">
    <property type="entry name" value="Cyt_P450"/>
</dbReference>
<dbReference type="InterPro" id="IPR017972">
    <property type="entry name" value="Cyt_P450_CS"/>
</dbReference>
<dbReference type="InterPro" id="IPR002403">
    <property type="entry name" value="Cyt_P450_E_grp-IV"/>
</dbReference>
<dbReference type="InterPro" id="IPR036396">
    <property type="entry name" value="Cyt_P450_sf"/>
</dbReference>
<dbReference type="PANTHER" id="PTHR24304:SF2">
    <property type="entry name" value="24-HYDROXYCHOLESTEROL 7-ALPHA-HYDROXYLASE"/>
    <property type="match status" value="1"/>
</dbReference>
<dbReference type="PANTHER" id="PTHR24304">
    <property type="entry name" value="CYTOCHROME P450 FAMILY 7"/>
    <property type="match status" value="1"/>
</dbReference>
<dbReference type="Pfam" id="PF00067">
    <property type="entry name" value="p450"/>
    <property type="match status" value="1"/>
</dbReference>
<dbReference type="PRINTS" id="PR00465">
    <property type="entry name" value="EP450IV"/>
</dbReference>
<dbReference type="PRINTS" id="PR00385">
    <property type="entry name" value="P450"/>
</dbReference>
<dbReference type="SUPFAM" id="SSF48264">
    <property type="entry name" value="Cytochrome P450"/>
    <property type="match status" value="1"/>
</dbReference>
<dbReference type="PROSITE" id="PS00086">
    <property type="entry name" value="CYTOCHROME_P450"/>
    <property type="match status" value="1"/>
</dbReference>
<sequence length="507" mass="57533">MFHLLIYPLWVLVALFAVIIANLLYQQLPRRPDEPPLVFHWFPFFGNAVAYGLDPCGFFEKCREKHGDVFTFILFGRKIVACLGVDGNDFVLNSRLQDANAEEVYGPLTIPVFGSDVVYDCPNSKLMEQKKFVKFGLTQKALESHVQLIEREVLDYVETDPSFSGRTSTIDVPKAMAEITIFTASRSLQGEEVRRKLTAEFAALYHDLDLGFRPVNFLFPWLPLPHNRKRDAAHIKMREVYMDIINDRRKGGIRTEDGTDMIANLMGCTYKNGQPVPDKEIAHMMITLLMAGQHSSSSASSWIVLHLASSPDITEELYQEQLVNLSVNGALPPLQYSDLDKLPLLQNVVKETLRVHSSIHSILRKVKRPMQVPNSPYTITTDKVIMASPTVTAMSEEYFENAKTWNPHRWDNRAKEEVDTEDVIDYGYGAVSKGTKSPYLPFGAGRHRCIGEKFAYVNLGVIVATLVRNFRLSTIDGRPGVPETDYTSLFSRPAQPAFIRWERRKKI</sequence>
<reference key="1">
    <citation type="journal article" date="2007" name="Science">
        <title>The Fusarium graminearum genome reveals a link between localized polymorphism and pathogen specialization.</title>
        <authorList>
            <person name="Cuomo C.A."/>
            <person name="Gueldener U."/>
            <person name="Xu J.-R."/>
            <person name="Trail F."/>
            <person name="Turgeon B.G."/>
            <person name="Di Pietro A."/>
            <person name="Walton J.D."/>
            <person name="Ma L.-J."/>
            <person name="Baker S.E."/>
            <person name="Rep M."/>
            <person name="Adam G."/>
            <person name="Antoniw J."/>
            <person name="Baldwin T."/>
            <person name="Calvo S.E."/>
            <person name="Chang Y.-L."/>
            <person name="DeCaprio D."/>
            <person name="Gale L.R."/>
            <person name="Gnerre S."/>
            <person name="Goswami R.S."/>
            <person name="Hammond-Kosack K."/>
            <person name="Harris L.J."/>
            <person name="Hilburn K."/>
            <person name="Kennell J.C."/>
            <person name="Kroken S."/>
            <person name="Magnuson J.K."/>
            <person name="Mannhaupt G."/>
            <person name="Mauceli E.W."/>
            <person name="Mewes H.-W."/>
            <person name="Mitterbauer R."/>
            <person name="Muehlbauer G."/>
            <person name="Muensterkoetter M."/>
            <person name="Nelson D."/>
            <person name="O'Donnell K."/>
            <person name="Ouellet T."/>
            <person name="Qi W."/>
            <person name="Quesneville H."/>
            <person name="Roncero M.I.G."/>
            <person name="Seong K.-Y."/>
            <person name="Tetko I.V."/>
            <person name="Urban M."/>
            <person name="Waalwijk C."/>
            <person name="Ward T.J."/>
            <person name="Yao J."/>
            <person name="Birren B.W."/>
            <person name="Kistler H.C."/>
        </authorList>
    </citation>
    <scope>NUCLEOTIDE SEQUENCE [LARGE SCALE GENOMIC DNA]</scope>
    <source>
        <strain>ATCC MYA-4620 / CBS 123657 / FGSC 9075 / NRRL 31084 / PH-1</strain>
    </source>
</reference>
<reference key="2">
    <citation type="journal article" date="2010" name="Nature">
        <title>Comparative genomics reveals mobile pathogenicity chromosomes in Fusarium.</title>
        <authorList>
            <person name="Ma L.-J."/>
            <person name="van der Does H.C."/>
            <person name="Borkovich K.A."/>
            <person name="Coleman J.J."/>
            <person name="Daboussi M.-J."/>
            <person name="Di Pietro A."/>
            <person name="Dufresne M."/>
            <person name="Freitag M."/>
            <person name="Grabherr M."/>
            <person name="Henrissat B."/>
            <person name="Houterman P.M."/>
            <person name="Kang S."/>
            <person name="Shim W.-B."/>
            <person name="Woloshuk C."/>
            <person name="Xie X."/>
            <person name="Xu J.-R."/>
            <person name="Antoniw J."/>
            <person name="Baker S.E."/>
            <person name="Bluhm B.H."/>
            <person name="Breakspear A."/>
            <person name="Brown D.W."/>
            <person name="Butchko R.A.E."/>
            <person name="Chapman S."/>
            <person name="Coulson R."/>
            <person name="Coutinho P.M."/>
            <person name="Danchin E.G.J."/>
            <person name="Diener A."/>
            <person name="Gale L.R."/>
            <person name="Gardiner D.M."/>
            <person name="Goff S."/>
            <person name="Hammond-Kosack K.E."/>
            <person name="Hilburn K."/>
            <person name="Hua-Van A."/>
            <person name="Jonkers W."/>
            <person name="Kazan K."/>
            <person name="Kodira C.D."/>
            <person name="Koehrsen M."/>
            <person name="Kumar L."/>
            <person name="Lee Y.-H."/>
            <person name="Li L."/>
            <person name="Manners J.M."/>
            <person name="Miranda-Saavedra D."/>
            <person name="Mukherjee M."/>
            <person name="Park G."/>
            <person name="Park J."/>
            <person name="Park S.-Y."/>
            <person name="Proctor R.H."/>
            <person name="Regev A."/>
            <person name="Ruiz-Roldan M.C."/>
            <person name="Sain D."/>
            <person name="Sakthikumar S."/>
            <person name="Sykes S."/>
            <person name="Schwartz D.C."/>
            <person name="Turgeon B.G."/>
            <person name="Wapinski I."/>
            <person name="Yoder O."/>
            <person name="Young S."/>
            <person name="Zeng Q."/>
            <person name="Zhou S."/>
            <person name="Galagan J."/>
            <person name="Cuomo C.A."/>
            <person name="Kistler H.C."/>
            <person name="Rep M."/>
        </authorList>
    </citation>
    <scope>GENOME REANNOTATION</scope>
    <source>
        <strain>ATCC MYA-4620 / CBS 123657 / FGSC 9075 / NRRL 31084 / PH-1</strain>
    </source>
</reference>
<reference key="3">
    <citation type="journal article" date="2015" name="BMC Genomics">
        <title>The completed genome sequence of the pathogenic ascomycete fungus Fusarium graminearum.</title>
        <authorList>
            <person name="King R."/>
            <person name="Urban M."/>
            <person name="Hammond-Kosack M.C.U."/>
            <person name="Hassani-Pak K."/>
            <person name="Hammond-Kosack K.E."/>
        </authorList>
    </citation>
    <scope>NUCLEOTIDE SEQUENCE [LARGE SCALE GENOMIC DNA]</scope>
    <source>
        <strain>ATCC MYA-4620 / CBS 123657 / FGSC 9075 / NRRL 31084 / PH-1</strain>
    </source>
</reference>
<reference key="4">
    <citation type="journal article" date="2011" name="Fungal Genet. Biol.">
        <title>Paralogous cyp51 genes in Fusarium graminearum mediate differential sensitivity to sterol demethylation inhibitors.</title>
        <authorList>
            <person name="Liu X."/>
            <person name="Yu F."/>
            <person name="Schnabel G."/>
            <person name="Wu J."/>
            <person name="Wang Z."/>
            <person name="Ma Z."/>
        </authorList>
    </citation>
    <scope>FUNCTION</scope>
</reference>
<reference key="5">
    <citation type="journal article" date="2013" name="Mol. Plant Pathol.">
        <title>Involvement of FgERG4 in ergosterol biosynthesis, vegetative differentiation and virulence in Fusarium graminearum.</title>
        <authorList>
            <person name="Liu X."/>
            <person name="Jiang J."/>
            <person name="Yin Y."/>
            <person name="Ma Z."/>
        </authorList>
    </citation>
    <scope>INDUCTION</scope>
</reference>
<reference key="6">
    <citation type="journal article" date="2013" name="New Phytol.">
        <title>Characterization of the sterol 14alpha-demethylases of Fusarium graminearum identifies a novel genus-specific CYP51 function.</title>
        <authorList>
            <person name="Fan J."/>
            <person name="Urban M."/>
            <person name="Parker J.E."/>
            <person name="Brewer H.C."/>
            <person name="Kelly S.L."/>
            <person name="Hammond-Kosack K.E."/>
            <person name="Fraaije B.A."/>
            <person name="Liu X."/>
            <person name="Cools H.J."/>
        </authorList>
    </citation>
    <scope>FUNCTION</scope>
    <scope>DISRUPTION PHENOTYPE</scope>
    <scope>INDUCTION</scope>
    <scope>PATHWAY</scope>
</reference>
<reference key="7">
    <citation type="journal article" date="2013" name="Proc. Natl. Acad. Sci. U.S.A.">
        <title>Host-induced gene silencing of cytochrome P450 lanosterol C14alpha-demethylase-encoding genes confers strong resistance to Fusarium species.</title>
        <authorList>
            <person name="Koch A."/>
            <person name="Kumar N."/>
            <person name="Weber L."/>
            <person name="Keller H."/>
            <person name="Imani J."/>
            <person name="Kogel K.H."/>
        </authorList>
    </citation>
    <scope>DISRUPTION PHENOTYPE</scope>
</reference>
<reference key="8">
    <citation type="journal article" date="2019" name="Nat. Commun.">
        <title>A phosphorylated transcription factor regulates sterol biosynthesis in Fusarium graminearum.</title>
        <authorList>
            <person name="Liu Z."/>
            <person name="Jian Y."/>
            <person name="Chen Y."/>
            <person name="Kistler H.C."/>
            <person name="He P."/>
            <person name="Ma Z."/>
            <person name="Yin Y."/>
        </authorList>
    </citation>
    <scope>INDUCTION</scope>
</reference>
<evidence type="ECO:0000250" key="1">
    <source>
        <dbReference type="UniProtKB" id="P10614"/>
    </source>
</evidence>
<evidence type="ECO:0000250" key="2">
    <source>
        <dbReference type="UniProtKB" id="Q4WNT5"/>
    </source>
</evidence>
<evidence type="ECO:0000255" key="3"/>
<evidence type="ECO:0000269" key="4">
    <source>
    </source>
</evidence>
<evidence type="ECO:0000269" key="5">
    <source>
    </source>
</evidence>
<evidence type="ECO:0000269" key="6">
    <source>
    </source>
</evidence>
<evidence type="ECO:0000269" key="7">
    <source>
    </source>
</evidence>
<evidence type="ECO:0000269" key="8">
    <source>
    </source>
</evidence>
<evidence type="ECO:0000303" key="9">
    <source>
    </source>
</evidence>
<evidence type="ECO:0000303" key="10">
    <source>
    </source>
</evidence>
<evidence type="ECO:0000305" key="11"/>
<evidence type="ECO:0000305" key="12">
    <source>
    </source>
</evidence>
<evidence type="ECO:0000305" key="13">
    <source>
    </source>
</evidence>
<accession>I1RJR2</accession>
<gene>
    <name evidence="9" type="primary">CYP51A</name>
    <name type="ORF">FG04092</name>
    <name type="ORF">FGRAMPH1_01T14465</name>
</gene>
<proteinExistence type="evidence at transcript level"/>
<keyword id="KW-0256">Endoplasmic reticulum</keyword>
<keyword id="KW-0349">Heme</keyword>
<keyword id="KW-0408">Iron</keyword>
<keyword id="KW-0444">Lipid biosynthesis</keyword>
<keyword id="KW-0443">Lipid metabolism</keyword>
<keyword id="KW-0472">Membrane</keyword>
<keyword id="KW-0479">Metal-binding</keyword>
<keyword id="KW-0503">Monooxygenase</keyword>
<keyword id="KW-0560">Oxidoreductase</keyword>
<keyword id="KW-1185">Reference proteome</keyword>
<keyword id="KW-0752">Steroid biosynthesis</keyword>
<keyword id="KW-0753">Steroid metabolism</keyword>
<keyword id="KW-0756">Sterol biosynthesis</keyword>
<keyword id="KW-1207">Sterol metabolism</keyword>
<keyword id="KW-0812">Transmembrane</keyword>
<keyword id="KW-1133">Transmembrane helix</keyword>
<feature type="chain" id="PRO_0000454355" description="Sterol 14-alpha demethylase CYP51A">
    <location>
        <begin position="1"/>
        <end position="507"/>
    </location>
</feature>
<feature type="transmembrane region" description="Helical" evidence="3">
    <location>
        <begin position="7"/>
        <end position="29"/>
    </location>
</feature>
<feature type="binding site" evidence="1">
    <location>
        <position position="105"/>
    </location>
    <ligand>
        <name>lanosterol</name>
        <dbReference type="ChEBI" id="CHEBI:16521"/>
    </ligand>
</feature>
<feature type="binding site" description="axial binding residue" evidence="1">
    <location>
        <position position="449"/>
    </location>
    <ligand>
        <name>heme</name>
        <dbReference type="ChEBI" id="CHEBI:30413"/>
    </ligand>
    <ligandPart>
        <name>Fe</name>
        <dbReference type="ChEBI" id="CHEBI:18248"/>
    </ligandPart>
</feature>
<organism>
    <name type="scientific">Gibberella zeae (strain ATCC MYA-4620 / CBS 123657 / FGSC 9075 / NRRL 31084 / PH-1)</name>
    <name type="common">Wheat head blight fungus</name>
    <name type="synonym">Fusarium graminearum</name>
    <dbReference type="NCBI Taxonomy" id="229533"/>
    <lineage>
        <taxon>Eukaryota</taxon>
        <taxon>Fungi</taxon>
        <taxon>Dikarya</taxon>
        <taxon>Ascomycota</taxon>
        <taxon>Pezizomycotina</taxon>
        <taxon>Sordariomycetes</taxon>
        <taxon>Hypocreomycetidae</taxon>
        <taxon>Hypocreales</taxon>
        <taxon>Nectriaceae</taxon>
        <taxon>Fusarium</taxon>
    </lineage>
</organism>
<name>CP51A_GIBZE</name>
<protein>
    <recommendedName>
        <fullName evidence="9">Sterol 14-alpha demethylase CYP51A</fullName>
        <ecNumber evidence="12">1.14.14.154</ecNumber>
    </recommendedName>
    <alternativeName>
        <fullName evidence="10">Cytochrome P450 sterol 14alpha-demethylase A</fullName>
        <shortName evidence="10">CYP51A</shortName>
    </alternativeName>
    <alternativeName>
        <fullName evidence="10">ERG11</fullName>
    </alternativeName>
    <alternativeName>
        <fullName evidence="9">Ergosterol biosynthetic protein CYP51A</fullName>
    </alternativeName>
</protein>